<accession>P47129</accession>
<accession>D6VWQ2</accession>
<dbReference type="EMBL" id="Z49583">
    <property type="protein sequence ID" value="CAA89610.1"/>
    <property type="molecule type" value="Genomic_DNA"/>
</dbReference>
<dbReference type="EMBL" id="L47993">
    <property type="protein sequence ID" value="AAB39306.1"/>
    <property type="molecule type" value="Genomic_DNA"/>
</dbReference>
<dbReference type="EMBL" id="AY557912">
    <property type="protein sequence ID" value="AAS56238.1"/>
    <property type="molecule type" value="Genomic_DNA"/>
</dbReference>
<dbReference type="EMBL" id="BK006943">
    <property type="protein sequence ID" value="DAA08868.1"/>
    <property type="molecule type" value="Genomic_DNA"/>
</dbReference>
<dbReference type="PIR" id="S57102">
    <property type="entry name" value="S57102"/>
</dbReference>
<dbReference type="RefSeq" id="NP_012616.1">
    <property type="nucleotide sequence ID" value="NM_001181740.1"/>
</dbReference>
<dbReference type="SMR" id="P47129"/>
<dbReference type="BioGRID" id="33838">
    <property type="interactions" value="58"/>
</dbReference>
<dbReference type="DIP" id="DIP-2890N"/>
<dbReference type="FunCoup" id="P47129">
    <property type="interactions" value="29"/>
</dbReference>
<dbReference type="IntAct" id="P47129">
    <property type="interactions" value="10"/>
</dbReference>
<dbReference type="MINT" id="P47129"/>
<dbReference type="STRING" id="4932.YJR083C"/>
<dbReference type="GlyGen" id="P47129">
    <property type="glycosylation" value="3 sites, 1 O-linked glycan (3 sites)"/>
</dbReference>
<dbReference type="iPTMnet" id="P47129"/>
<dbReference type="PaxDb" id="4932-YJR083C"/>
<dbReference type="PeptideAtlas" id="P47129"/>
<dbReference type="EnsemblFungi" id="YJR083C_mRNA">
    <property type="protein sequence ID" value="YJR083C"/>
    <property type="gene ID" value="YJR083C"/>
</dbReference>
<dbReference type="GeneID" id="853545"/>
<dbReference type="KEGG" id="sce:YJR083C"/>
<dbReference type="AGR" id="SGD:S000003843"/>
<dbReference type="SGD" id="S000003843">
    <property type="gene designation" value="ACF4"/>
</dbReference>
<dbReference type="VEuPathDB" id="FungiDB:YJR083C"/>
<dbReference type="eggNOG" id="ENOG502S3WS">
    <property type="taxonomic scope" value="Eukaryota"/>
</dbReference>
<dbReference type="HOGENOM" id="CLU_064343_0_0_1"/>
<dbReference type="InParanoid" id="P47129"/>
<dbReference type="OMA" id="LPPRNTM"/>
<dbReference type="OrthoDB" id="4061731at2759"/>
<dbReference type="BioCyc" id="YEAST:G3O-31711-MONOMER"/>
<dbReference type="BioGRID-ORCS" id="853545">
    <property type="hits" value="1 hit in 10 CRISPR screens"/>
</dbReference>
<dbReference type="PRO" id="PR:P47129"/>
<dbReference type="Proteomes" id="UP000002311">
    <property type="component" value="Chromosome X"/>
</dbReference>
<dbReference type="RNAct" id="P47129">
    <property type="molecule type" value="protein"/>
</dbReference>
<feature type="chain" id="PRO_0000203104" description="Assembly-complementing factor 4">
    <location>
        <begin position="1"/>
        <end position="309"/>
    </location>
</feature>
<feature type="region of interest" description="Disordered" evidence="1">
    <location>
        <begin position="1"/>
        <end position="80"/>
    </location>
</feature>
<feature type="region of interest" description="Disordered" evidence="1">
    <location>
        <begin position="164"/>
        <end position="240"/>
    </location>
</feature>
<feature type="region of interest" description="Disordered" evidence="1">
    <location>
        <begin position="286"/>
        <end position="309"/>
    </location>
</feature>
<feature type="compositionally biased region" description="Basic and acidic residues" evidence="1">
    <location>
        <begin position="13"/>
        <end position="24"/>
    </location>
</feature>
<feature type="compositionally biased region" description="Basic and acidic residues" evidence="1">
    <location>
        <begin position="34"/>
        <end position="44"/>
    </location>
</feature>
<feature type="compositionally biased region" description="Polar residues" evidence="1">
    <location>
        <begin position="61"/>
        <end position="80"/>
    </location>
</feature>
<feature type="compositionally biased region" description="Low complexity" evidence="1">
    <location>
        <begin position="174"/>
        <end position="188"/>
    </location>
</feature>
<feature type="compositionally biased region" description="Low complexity" evidence="1">
    <location>
        <begin position="205"/>
        <end position="214"/>
    </location>
</feature>
<feature type="compositionally biased region" description="Low complexity" evidence="1">
    <location>
        <begin position="222"/>
        <end position="239"/>
    </location>
</feature>
<feature type="compositionally biased region" description="Acidic residues" evidence="1">
    <location>
        <begin position="287"/>
        <end position="298"/>
    </location>
</feature>
<feature type="modified residue" description="Phosphoserine" evidence="4">
    <location>
        <position position="44"/>
    </location>
</feature>
<feature type="modified residue" description="Phosphoserine" evidence="5 6">
    <location>
        <position position="71"/>
    </location>
</feature>
<feature type="modified residue" description="Phosphoserine" evidence="5 6 7">
    <location>
        <position position="74"/>
    </location>
</feature>
<feature type="modified residue" description="Phosphoserine" evidence="5 7">
    <location>
        <position position="78"/>
    </location>
</feature>
<feature type="modified residue" description="Phosphoserine" evidence="5 6 7">
    <location>
        <position position="165"/>
    </location>
</feature>
<feature type="modified residue" description="Phosphoserine" evidence="5 6 7">
    <location>
        <position position="288"/>
    </location>
</feature>
<sequence length="309" mass="35521">MSEDQRVISQPIELHKLSIVDKHSQGQQQQPHQKQHEVQPESKSPRVTTPLKPKRLAIPISSPQRSTTNQSPVSDHASPISTDQDLIYKLAAKHREINELSFKLEVAQKELKQLELQFKDTLPRNGQQKLGNQNPSEYLSTFTKRIQQTFVDVNNSPNMLKGKKSINDFFSKPNNNVNSNINNTLPNRKPNPPPNRSQRMQNIAPSRSSESTPTSGPPLLPPRNTMKNANTTATAGENTPFLQRILNKFNQMNMEEDEFDDLLEKRKSKKDHYYIKENLGYEYDEVRSEDEDDEEFEPMGDIPVHLFKR</sequence>
<organism>
    <name type="scientific">Saccharomyces cerevisiae (strain ATCC 204508 / S288c)</name>
    <name type="common">Baker's yeast</name>
    <dbReference type="NCBI Taxonomy" id="559292"/>
    <lineage>
        <taxon>Eukaryota</taxon>
        <taxon>Fungi</taxon>
        <taxon>Dikarya</taxon>
        <taxon>Ascomycota</taxon>
        <taxon>Saccharomycotina</taxon>
        <taxon>Saccharomycetes</taxon>
        <taxon>Saccharomycetales</taxon>
        <taxon>Saccharomycetaceae</taxon>
        <taxon>Saccharomyces</taxon>
    </lineage>
</organism>
<evidence type="ECO:0000256" key="1">
    <source>
        <dbReference type="SAM" id="MobiDB-lite"/>
    </source>
</evidence>
<evidence type="ECO:0000269" key="2">
    <source>
    </source>
</evidence>
<evidence type="ECO:0000269" key="3">
    <source>
    </source>
</evidence>
<evidence type="ECO:0007744" key="4">
    <source>
    </source>
</evidence>
<evidence type="ECO:0007744" key="5">
    <source>
    </source>
</evidence>
<evidence type="ECO:0007744" key="6">
    <source>
    </source>
</evidence>
<evidence type="ECO:0007744" key="7">
    <source>
    </source>
</evidence>
<comment type="function">
    <text evidence="3">May be involved in actin cytoskeleton organization and biogenesis.</text>
</comment>
<comment type="interaction">
    <interactant intactId="EBI-25556">
        <id>P47129</id>
    </interactant>
    <interactant intactId="EBI-22980">
        <id>P43603</id>
        <label>LSB3</label>
    </interactant>
    <organismsDiffer>false</organismsDiffer>
    <experiments>4</experiments>
</comment>
<comment type="interaction">
    <interactant intactId="EBI-25556">
        <id>P47129</id>
    </interactant>
    <interactant intactId="EBI-14500">
        <id>P39743</id>
        <label>RVS167</label>
    </interactant>
    <organismsDiffer>false</organismsDiffer>
    <experiments>5</experiments>
</comment>
<comment type="interaction">
    <interactant intactId="EBI-25556">
        <id>P47129</id>
    </interactant>
    <interactant intactId="EBI-24460">
        <id>P32793</id>
        <label>YSC84</label>
    </interactant>
    <organismsDiffer>false</organismsDiffer>
    <experiments>4</experiments>
</comment>
<comment type="miscellaneous">
    <text evidence="2">Present with 1140 molecules/cell in log phase SD medium.</text>
</comment>
<protein>
    <recommendedName>
        <fullName>Assembly-complementing factor 4</fullName>
    </recommendedName>
</protein>
<proteinExistence type="evidence at protein level"/>
<gene>
    <name type="primary">ACF4</name>
    <name type="ordered locus">YJR083C</name>
    <name type="ORF">J1857</name>
</gene>
<reference key="1">
    <citation type="journal article" date="1996" name="Yeast">
        <title>Analysis of a 62 kb DNA sequence of chromosome X reveals 36 open reading frames and a gene cluster with a counterpart on chromosome XI.</title>
        <authorList>
            <person name="Huang M.-E."/>
            <person name="Manus V."/>
            <person name="Chuat J.-C."/>
            <person name="Galibert F."/>
        </authorList>
    </citation>
    <scope>NUCLEOTIDE SEQUENCE [GENOMIC DNA]</scope>
    <source>
        <strain>ATCC 204508 / S288c</strain>
    </source>
</reference>
<reference key="2">
    <citation type="journal article" date="1996" name="EMBO J.">
        <title>Complete nucleotide sequence of Saccharomyces cerevisiae chromosome X.</title>
        <authorList>
            <person name="Galibert F."/>
            <person name="Alexandraki D."/>
            <person name="Baur A."/>
            <person name="Boles E."/>
            <person name="Chalwatzis N."/>
            <person name="Chuat J.-C."/>
            <person name="Coster F."/>
            <person name="Cziepluch C."/>
            <person name="de Haan M."/>
            <person name="Domdey H."/>
            <person name="Durand P."/>
            <person name="Entian K.-D."/>
            <person name="Gatius M."/>
            <person name="Goffeau A."/>
            <person name="Grivell L.A."/>
            <person name="Hennemann A."/>
            <person name="Herbert C.J."/>
            <person name="Heumann K."/>
            <person name="Hilger F."/>
            <person name="Hollenberg C.P."/>
            <person name="Huang M.-E."/>
            <person name="Jacq C."/>
            <person name="Jauniaux J.-C."/>
            <person name="Katsoulou C."/>
            <person name="Kirchrath L."/>
            <person name="Kleine K."/>
            <person name="Kordes E."/>
            <person name="Koetter P."/>
            <person name="Liebl S."/>
            <person name="Louis E.J."/>
            <person name="Manus V."/>
            <person name="Mewes H.-W."/>
            <person name="Miosga T."/>
            <person name="Obermaier B."/>
            <person name="Perea J."/>
            <person name="Pohl T.M."/>
            <person name="Portetelle D."/>
            <person name="Pujol A."/>
            <person name="Purnelle B."/>
            <person name="Ramezani Rad M."/>
            <person name="Rasmussen S.W."/>
            <person name="Rose M."/>
            <person name="Rossau R."/>
            <person name="Schaaff-Gerstenschlaeger I."/>
            <person name="Smits P.H.M."/>
            <person name="Scarcez T."/>
            <person name="Soriano N."/>
            <person name="To Van D."/>
            <person name="Tzermia M."/>
            <person name="Van Broekhoven A."/>
            <person name="Vandenbol M."/>
            <person name="Wedler H."/>
            <person name="von Wettstein D."/>
            <person name="Wambutt R."/>
            <person name="Zagulski M."/>
            <person name="Zollner A."/>
            <person name="Karpfinger-Hartl L."/>
        </authorList>
    </citation>
    <scope>NUCLEOTIDE SEQUENCE [LARGE SCALE GENOMIC DNA]</scope>
    <source>
        <strain>ATCC 204508 / S288c</strain>
    </source>
</reference>
<reference key="3">
    <citation type="journal article" date="2014" name="G3 (Bethesda)">
        <title>The reference genome sequence of Saccharomyces cerevisiae: Then and now.</title>
        <authorList>
            <person name="Engel S.R."/>
            <person name="Dietrich F.S."/>
            <person name="Fisk D.G."/>
            <person name="Binkley G."/>
            <person name="Balakrishnan R."/>
            <person name="Costanzo M.C."/>
            <person name="Dwight S.S."/>
            <person name="Hitz B.C."/>
            <person name="Karra K."/>
            <person name="Nash R.S."/>
            <person name="Weng S."/>
            <person name="Wong E.D."/>
            <person name="Lloyd P."/>
            <person name="Skrzypek M.S."/>
            <person name="Miyasato S.R."/>
            <person name="Simison M."/>
            <person name="Cherry J.M."/>
        </authorList>
    </citation>
    <scope>GENOME REANNOTATION</scope>
    <source>
        <strain>ATCC 204508 / S288c</strain>
    </source>
</reference>
<reference key="4">
    <citation type="journal article" date="2007" name="Genome Res.">
        <title>Approaching a complete repository of sequence-verified protein-encoding clones for Saccharomyces cerevisiae.</title>
        <authorList>
            <person name="Hu Y."/>
            <person name="Rolfs A."/>
            <person name="Bhullar B."/>
            <person name="Murthy T.V.S."/>
            <person name="Zhu C."/>
            <person name="Berger M.F."/>
            <person name="Camargo A.A."/>
            <person name="Kelley F."/>
            <person name="McCarron S."/>
            <person name="Jepson D."/>
            <person name="Richardson A."/>
            <person name="Raphael J."/>
            <person name="Moreira D."/>
            <person name="Taycher E."/>
            <person name="Zuo D."/>
            <person name="Mohr S."/>
            <person name="Kane M.F."/>
            <person name="Williamson J."/>
            <person name="Simpson A.J.G."/>
            <person name="Bulyk M.L."/>
            <person name="Harlow E."/>
            <person name="Marsischky G."/>
            <person name="Kolodner R.D."/>
            <person name="LaBaer J."/>
        </authorList>
    </citation>
    <scope>NUCLEOTIDE SEQUENCE [GENOMIC DNA]</scope>
    <source>
        <strain>ATCC 204508 / S288c</strain>
    </source>
</reference>
<reference key="5">
    <citation type="journal article" date="2003" name="Nature">
        <title>Global analysis of protein expression in yeast.</title>
        <authorList>
            <person name="Ghaemmaghami S."/>
            <person name="Huh W.-K."/>
            <person name="Bower K."/>
            <person name="Howson R.W."/>
            <person name="Belle A."/>
            <person name="Dephoure N."/>
            <person name="O'Shea E.K."/>
            <person name="Weissman J.S."/>
        </authorList>
    </citation>
    <scope>LEVEL OF PROTEIN EXPRESSION [LARGE SCALE ANALYSIS]</scope>
</reference>
<reference key="6">
    <citation type="journal article" date="2003" name="Proc. Natl. Acad. Sci. U.S.A.">
        <title>Predicting protein functions from redundancies in large-scale protein interaction networks.</title>
        <authorList>
            <person name="Samanta M.P."/>
            <person name="Liang S."/>
        </authorList>
    </citation>
    <scope>FUNCTION PREDICTION</scope>
</reference>
<reference key="7">
    <citation type="journal article" date="2007" name="J. Proteome Res.">
        <title>Large-scale phosphorylation analysis of alpha-factor-arrested Saccharomyces cerevisiae.</title>
        <authorList>
            <person name="Li X."/>
            <person name="Gerber S.A."/>
            <person name="Rudner A.D."/>
            <person name="Beausoleil S.A."/>
            <person name="Haas W."/>
            <person name="Villen J."/>
            <person name="Elias J.E."/>
            <person name="Gygi S.P."/>
        </authorList>
    </citation>
    <scope>PHOSPHORYLATION [LARGE SCALE ANALYSIS] AT SER-71; SER-74; SER-78; SER-165 AND SER-288</scope>
    <scope>IDENTIFICATION BY MASS SPECTROMETRY [LARGE SCALE ANALYSIS]</scope>
    <source>
        <strain>ADR376</strain>
    </source>
</reference>
<reference key="8">
    <citation type="journal article" date="2007" name="Proc. Natl. Acad. Sci. U.S.A.">
        <title>Analysis of phosphorylation sites on proteins from Saccharomyces cerevisiae by electron transfer dissociation (ETD) mass spectrometry.</title>
        <authorList>
            <person name="Chi A."/>
            <person name="Huttenhower C."/>
            <person name="Geer L.Y."/>
            <person name="Coon J.J."/>
            <person name="Syka J.E.P."/>
            <person name="Bai D.L."/>
            <person name="Shabanowitz J."/>
            <person name="Burke D.J."/>
            <person name="Troyanskaya O.G."/>
            <person name="Hunt D.F."/>
        </authorList>
    </citation>
    <scope>PHOSPHORYLATION [LARGE SCALE ANALYSIS] AT SER-44</scope>
    <scope>IDENTIFICATION BY MASS SPECTROMETRY [LARGE SCALE ANALYSIS]</scope>
</reference>
<reference key="9">
    <citation type="journal article" date="2008" name="Mol. Cell. Proteomics">
        <title>A multidimensional chromatography technology for in-depth phosphoproteome analysis.</title>
        <authorList>
            <person name="Albuquerque C.P."/>
            <person name="Smolka M.B."/>
            <person name="Payne S.H."/>
            <person name="Bafna V."/>
            <person name="Eng J."/>
            <person name="Zhou H."/>
        </authorList>
    </citation>
    <scope>PHOSPHORYLATION [LARGE SCALE ANALYSIS] AT SER-71; SER-74; SER-165 AND SER-288</scope>
    <scope>IDENTIFICATION BY MASS SPECTROMETRY [LARGE SCALE ANALYSIS]</scope>
</reference>
<reference key="10">
    <citation type="journal article" date="2009" name="Science">
        <title>Global analysis of Cdk1 substrate phosphorylation sites provides insights into evolution.</title>
        <authorList>
            <person name="Holt L.J."/>
            <person name="Tuch B.B."/>
            <person name="Villen J."/>
            <person name="Johnson A.D."/>
            <person name="Gygi S.P."/>
            <person name="Morgan D.O."/>
        </authorList>
    </citation>
    <scope>PHOSPHORYLATION [LARGE SCALE ANALYSIS] AT SER-74; SER-78; SER-165 AND SER-288</scope>
    <scope>IDENTIFICATION BY MASS SPECTROMETRY [LARGE SCALE ANALYSIS]</scope>
</reference>
<keyword id="KW-0597">Phosphoprotein</keyword>
<keyword id="KW-1185">Reference proteome</keyword>
<name>ACF4_YEAST</name>